<proteinExistence type="evidence at transcript level"/>
<evidence type="ECO:0000255" key="1">
    <source>
        <dbReference type="PROSITE-ProRule" id="PRU00108"/>
    </source>
</evidence>
<evidence type="ECO:0000256" key="2">
    <source>
        <dbReference type="SAM" id="MobiDB-lite"/>
    </source>
</evidence>
<evidence type="ECO:0000269" key="3">
    <source>
    </source>
</evidence>
<evidence type="ECO:0000303" key="4">
    <source>
    </source>
</evidence>
<evidence type="ECO:0000305" key="5"/>
<evidence type="ECO:0000312" key="6">
    <source>
        <dbReference type="EMBL" id="CAA10305.1"/>
    </source>
</evidence>
<dbReference type="EMBL" id="AJ131094">
    <property type="protein sequence ID" value="CAA10305.1"/>
    <property type="molecule type" value="Genomic_DNA"/>
</dbReference>
<dbReference type="RefSeq" id="NP_001165683.1">
    <property type="nucleotide sequence ID" value="NM_001172212.1"/>
</dbReference>
<dbReference type="SMR" id="Q9YH71"/>
<dbReference type="GeneID" id="100337611"/>
<dbReference type="KEGG" id="xla:100337611"/>
<dbReference type="AGR" id="Xenbase:XB-GENE-6464310"/>
<dbReference type="CTD" id="100337611"/>
<dbReference type="Xenbase" id="XB-GENE-6464310">
    <property type="gene designation" value="ventx1.S"/>
</dbReference>
<dbReference type="OrthoDB" id="6159439at2759"/>
<dbReference type="Proteomes" id="UP000186698">
    <property type="component" value="Chromosome 7S"/>
</dbReference>
<dbReference type="Bgee" id="100337611">
    <property type="expression patterns" value="Expressed in gastrula and 2 other cell types or tissues"/>
</dbReference>
<dbReference type="GO" id="GO:0005634">
    <property type="term" value="C:nucleus"/>
    <property type="evidence" value="ECO:0000318"/>
    <property type="project" value="GO_Central"/>
</dbReference>
<dbReference type="GO" id="GO:0000981">
    <property type="term" value="F:DNA-binding transcription factor activity, RNA polymerase II-specific"/>
    <property type="evidence" value="ECO:0000318"/>
    <property type="project" value="GO_Central"/>
</dbReference>
<dbReference type="GO" id="GO:0000978">
    <property type="term" value="F:RNA polymerase II cis-regulatory region sequence-specific DNA binding"/>
    <property type="evidence" value="ECO:0000318"/>
    <property type="project" value="GO_Central"/>
</dbReference>
<dbReference type="GO" id="GO:0043565">
    <property type="term" value="F:sequence-specific DNA binding"/>
    <property type="evidence" value="ECO:0000250"/>
    <property type="project" value="UniProtKB"/>
</dbReference>
<dbReference type="GO" id="GO:0030509">
    <property type="term" value="P:BMP signaling pathway"/>
    <property type="evidence" value="ECO:0000315"/>
    <property type="project" value="UniProtKB"/>
</dbReference>
<dbReference type="GO" id="GO:0030154">
    <property type="term" value="P:cell differentiation"/>
    <property type="evidence" value="ECO:0000318"/>
    <property type="project" value="GO_Central"/>
</dbReference>
<dbReference type="GO" id="GO:0048264">
    <property type="term" value="P:determination of ventral identity"/>
    <property type="evidence" value="ECO:0000315"/>
    <property type="project" value="UniProtKB"/>
</dbReference>
<dbReference type="GO" id="GO:0001707">
    <property type="term" value="P:mesoderm formation"/>
    <property type="evidence" value="ECO:0000250"/>
    <property type="project" value="UniProtKB"/>
</dbReference>
<dbReference type="GO" id="GO:0045892">
    <property type="term" value="P:negative regulation of DNA-templated transcription"/>
    <property type="evidence" value="ECO:0000250"/>
    <property type="project" value="UniProtKB"/>
</dbReference>
<dbReference type="GO" id="GO:0000122">
    <property type="term" value="P:negative regulation of transcription by RNA polymerase II"/>
    <property type="evidence" value="ECO:0000250"/>
    <property type="project" value="UniProtKB"/>
</dbReference>
<dbReference type="GO" id="GO:0006357">
    <property type="term" value="P:regulation of transcription by RNA polymerase II"/>
    <property type="evidence" value="ECO:0000318"/>
    <property type="project" value="GO_Central"/>
</dbReference>
<dbReference type="CDD" id="cd00086">
    <property type="entry name" value="homeodomain"/>
    <property type="match status" value="1"/>
</dbReference>
<dbReference type="FunFam" id="1.10.10.60:FF:000451">
    <property type="entry name" value="Homeobox protein vent1"/>
    <property type="match status" value="1"/>
</dbReference>
<dbReference type="Gene3D" id="1.10.10.60">
    <property type="entry name" value="Homeodomain-like"/>
    <property type="match status" value="1"/>
</dbReference>
<dbReference type="InterPro" id="IPR001356">
    <property type="entry name" value="HD"/>
</dbReference>
<dbReference type="InterPro" id="IPR020479">
    <property type="entry name" value="HD_metazoa"/>
</dbReference>
<dbReference type="InterPro" id="IPR017970">
    <property type="entry name" value="Homeobox_CS"/>
</dbReference>
<dbReference type="InterPro" id="IPR050394">
    <property type="entry name" value="Homeobox_NK-like"/>
</dbReference>
<dbReference type="InterPro" id="IPR009057">
    <property type="entry name" value="Homeodomain-like_sf"/>
</dbReference>
<dbReference type="PANTHER" id="PTHR24340">
    <property type="entry name" value="HOMEOBOX PROTEIN NKX"/>
    <property type="match status" value="1"/>
</dbReference>
<dbReference type="PANTHER" id="PTHR24340:SF112">
    <property type="entry name" value="VENT HOMEOBOX"/>
    <property type="match status" value="1"/>
</dbReference>
<dbReference type="Pfam" id="PF00046">
    <property type="entry name" value="Homeodomain"/>
    <property type="match status" value="1"/>
</dbReference>
<dbReference type="PRINTS" id="PR00024">
    <property type="entry name" value="HOMEOBOX"/>
</dbReference>
<dbReference type="SMART" id="SM00389">
    <property type="entry name" value="HOX"/>
    <property type="match status" value="1"/>
</dbReference>
<dbReference type="SUPFAM" id="SSF46689">
    <property type="entry name" value="Homeodomain-like"/>
    <property type="match status" value="1"/>
</dbReference>
<dbReference type="PROSITE" id="PS00027">
    <property type="entry name" value="HOMEOBOX_1"/>
    <property type="match status" value="1"/>
</dbReference>
<dbReference type="PROSITE" id="PS50071">
    <property type="entry name" value="HOMEOBOX_2"/>
    <property type="match status" value="1"/>
</dbReference>
<comment type="function">
    <text evidence="3">Probable transcription regulator. Acts in a ventral signaling pathway downstream of bmp4 and vent2B.</text>
</comment>
<comment type="subcellular location">
    <subcellularLocation>
        <location evidence="5">Nucleus</location>
    </subcellularLocation>
</comment>
<comment type="tissue specificity">
    <text evidence="3">Expressed in the ventral marginal zone of gastrulae. At the end of gastrulation, predominantly localized to the ventral region of the closing slit blastopore. At early tail bud stage, expression is maintained only in the forming proctodeum.</text>
</comment>
<comment type="induction">
    <text evidence="3">By vent2B downstream of bmp4.</text>
</comment>
<keyword id="KW-0217">Developmental protein</keyword>
<keyword id="KW-0238">DNA-binding</keyword>
<keyword id="KW-0371">Homeobox</keyword>
<keyword id="KW-0539">Nucleus</keyword>
<keyword id="KW-1185">Reference proteome</keyword>
<keyword id="KW-0804">Transcription</keyword>
<keyword id="KW-0805">Transcription regulation</keyword>
<accession>Q9YH71</accession>
<gene>
    <name type="primary">vent1B</name>
    <name evidence="4" type="synonym">vent-1B</name>
</gene>
<protein>
    <recommendedName>
        <fullName>Homeobox protein vent1B</fullName>
        <shortName>Xvent-1B</shortName>
    </recommendedName>
</protein>
<organism>
    <name type="scientific">Xenopus laevis</name>
    <name type="common">African clawed frog</name>
    <dbReference type="NCBI Taxonomy" id="8355"/>
    <lineage>
        <taxon>Eukaryota</taxon>
        <taxon>Metazoa</taxon>
        <taxon>Chordata</taxon>
        <taxon>Craniata</taxon>
        <taxon>Vertebrata</taxon>
        <taxon>Euteleostomi</taxon>
        <taxon>Amphibia</taxon>
        <taxon>Batrachia</taxon>
        <taxon>Anura</taxon>
        <taxon>Pipoidea</taxon>
        <taxon>Pipidae</taxon>
        <taxon>Xenopodinae</taxon>
        <taxon>Xenopus</taxon>
        <taxon>Xenopus</taxon>
    </lineage>
</organism>
<sequence length="270" mass="30763">MVQQGFSIDLILARSKEEAADGKDSMSSRPHIPCAPQPLPPTKYAKEMPRRKDGQDVQEHTTSFQCSLGEQGNKLQYFSPSPAALHRTWGSSDEFSSAGSEDDTNECSPRPVRNFQDTDHNGKSTKSDRRLRTAFSPQQISKLEQAFNKQRYLGASERKKLATSLMLSEIQVKTWFQNRRMKLKRQIQDQQHSLVPPPVCYPQTFPYYPGGFPVPLNSGSFYQPPALPFQAPQHSYIPDQRFIPQPLPHHVRMSGALQEQYPPLFRAQYI</sequence>
<feature type="chain" id="PRO_0000279723" description="Homeobox protein vent1B">
    <location>
        <begin position="1"/>
        <end position="270"/>
    </location>
</feature>
<feature type="DNA-binding region" description="Homeobox" evidence="1">
    <location>
        <begin position="128"/>
        <end position="187"/>
    </location>
</feature>
<feature type="region of interest" description="Disordered" evidence="2">
    <location>
        <begin position="17"/>
        <end position="66"/>
    </location>
</feature>
<feature type="region of interest" description="Disordered" evidence="2">
    <location>
        <begin position="88"/>
        <end position="134"/>
    </location>
</feature>
<feature type="compositionally biased region" description="Basic and acidic residues" evidence="2">
    <location>
        <begin position="17"/>
        <end position="26"/>
    </location>
</feature>
<feature type="compositionally biased region" description="Basic and acidic residues" evidence="2">
    <location>
        <begin position="44"/>
        <end position="59"/>
    </location>
</feature>
<feature type="compositionally biased region" description="Polar residues" evidence="2">
    <location>
        <begin position="89"/>
        <end position="99"/>
    </location>
</feature>
<feature type="compositionally biased region" description="Basic and acidic residues" evidence="2">
    <location>
        <begin position="116"/>
        <end position="131"/>
    </location>
</feature>
<name>VNT1B_XENLA</name>
<reference evidence="5 6" key="1">
    <citation type="journal article" date="1999" name="Mech. Dev.">
        <title>Transcriptional regulation of Xvent homeobox genes.</title>
        <authorList>
            <person name="Rastegar S."/>
            <person name="Friedle H."/>
            <person name="Frommer G."/>
            <person name="Knoechel W."/>
        </authorList>
    </citation>
    <scope>NUCLEOTIDE SEQUENCE [GENOMIC DNA / MRNA]</scope>
    <scope>FUNCTION</scope>
    <scope>TISSUE SPECIFICITY</scope>
    <scope>INDUCTION</scope>
</reference>